<comment type="function">
    <text evidence="5 6">Positively regulates Ras-mediated pathways. Acts downstream or parallel to Raf, but upstream of nuclear factors in Ras signaling. Three mutants have been isolated, that suppress the rough eye phenotype caused by mutated Ras1 (sev-Ras1 v12). Inhibits yki activity by restricting its nuclear localization. Together with pav, has a role in the inhibition of microtubule sliding during neurite outgrowth (PubMed:32022690).</text>
</comment>
<comment type="subunit">
    <text evidence="1 4 5 6">Homodimer (By similarity). Interacts with phosphorylated yki (PubMed:18256197, PubMed:19900439). Interacts with pav (when serine phosphorylated); the interaction is necessary for association of the complex pav-14-3-3epsilon complex to the microtubules, thereby inhibiting microtubule sliding (PubMed:32022690).</text>
</comment>
<comment type="interaction">
    <interactant intactId="EBI-204478">
        <id>P92177</id>
    </interactant>
    <interactant intactId="EBI-2295779">
        <id>Q9VX75</id>
        <label>baz</label>
    </interactant>
    <organismsDiffer>false</organismsDiffer>
    <experiments>5</experiments>
</comment>
<comment type="alternative products">
    <event type="alternative splicing"/>
    <isoform>
        <id>P92177-3</id>
        <name>A</name>
        <sequence type="displayed"/>
    </isoform>
    <isoform>
        <id>P92177-2</id>
        <name>B</name>
        <sequence type="described" ref="VSP_008203"/>
    </isoform>
    <isoform>
        <id>P92177-4</id>
        <name>C</name>
        <sequence type="described" ref="VSP_026086"/>
    </isoform>
    <isoform>
        <id>P92177-1</id>
        <name>D</name>
        <sequence type="described" ref="VSP_008204"/>
    </isoform>
    <text>Additional isoforms may exist.</text>
</comment>
<comment type="similarity">
    <text evidence="9">Belongs to the 14-3-3 family.</text>
</comment>
<accession>P92177</accession>
<accession>Q8IN86</accession>
<accession>Q8IN87</accession>
<accession>Q9VEA8</accession>
<sequence>MTERENNVYKAKLAEQAERYDEMVEAMKKVASMDVELTVEERNLLSVAYKNVIGARRASWRIITSIEQKEENKGAEEKLEMIKTYRGQVEKELRDICSDILNVLEKHLIPCATSGESKVFYYKMKGDYHRYLAEFATGSDRKDAAENSLIAYKAASDIAMNDLPPTHPIRLGLALNFSVFYYEILNSPDRACRLAKAAFDDAIAELDTLSEESYKDSTLIMQLLRDNLTLWTSDMQAEEVDPNAGDGEPKEQIQDVEDQDVS</sequence>
<name>1433E_DROME</name>
<reference key="1">
    <citation type="journal article" date="1997" name="Genes Dev.">
        <title>14-3-3 epsilon positively regulates Ras-mediated signaling in Drosophila.</title>
        <authorList>
            <person name="Chang H.C."/>
            <person name="Rubin G.M."/>
        </authorList>
    </citation>
    <scope>NUCLEOTIDE SEQUENCE [GENOMIC DNA / MRNA] (ISOFORM D)</scope>
    <scope>MUTAGENESIS OF GLU-183; PHE-199 AND TYR-214</scope>
</reference>
<reference key="2">
    <citation type="journal article" date="2000" name="Science">
        <title>The genome sequence of Drosophila melanogaster.</title>
        <authorList>
            <person name="Adams M.D."/>
            <person name="Celniker S.E."/>
            <person name="Holt R.A."/>
            <person name="Evans C.A."/>
            <person name="Gocayne J.D."/>
            <person name="Amanatides P.G."/>
            <person name="Scherer S.E."/>
            <person name="Li P.W."/>
            <person name="Hoskins R.A."/>
            <person name="Galle R.F."/>
            <person name="George R.A."/>
            <person name="Lewis S.E."/>
            <person name="Richards S."/>
            <person name="Ashburner M."/>
            <person name="Henderson S.N."/>
            <person name="Sutton G.G."/>
            <person name="Wortman J.R."/>
            <person name="Yandell M.D."/>
            <person name="Zhang Q."/>
            <person name="Chen L.X."/>
            <person name="Brandon R.C."/>
            <person name="Rogers Y.-H.C."/>
            <person name="Blazej R.G."/>
            <person name="Champe M."/>
            <person name="Pfeiffer B.D."/>
            <person name="Wan K.H."/>
            <person name="Doyle C."/>
            <person name="Baxter E.G."/>
            <person name="Helt G."/>
            <person name="Nelson C.R."/>
            <person name="Miklos G.L.G."/>
            <person name="Abril J.F."/>
            <person name="Agbayani A."/>
            <person name="An H.-J."/>
            <person name="Andrews-Pfannkoch C."/>
            <person name="Baldwin D."/>
            <person name="Ballew R.M."/>
            <person name="Basu A."/>
            <person name="Baxendale J."/>
            <person name="Bayraktaroglu L."/>
            <person name="Beasley E.M."/>
            <person name="Beeson K.Y."/>
            <person name="Benos P.V."/>
            <person name="Berman B.P."/>
            <person name="Bhandari D."/>
            <person name="Bolshakov S."/>
            <person name="Borkova D."/>
            <person name="Botchan M.R."/>
            <person name="Bouck J."/>
            <person name="Brokstein P."/>
            <person name="Brottier P."/>
            <person name="Burtis K.C."/>
            <person name="Busam D.A."/>
            <person name="Butler H."/>
            <person name="Cadieu E."/>
            <person name="Center A."/>
            <person name="Chandra I."/>
            <person name="Cherry J.M."/>
            <person name="Cawley S."/>
            <person name="Dahlke C."/>
            <person name="Davenport L.B."/>
            <person name="Davies P."/>
            <person name="de Pablos B."/>
            <person name="Delcher A."/>
            <person name="Deng Z."/>
            <person name="Mays A.D."/>
            <person name="Dew I."/>
            <person name="Dietz S.M."/>
            <person name="Dodson K."/>
            <person name="Doup L.E."/>
            <person name="Downes M."/>
            <person name="Dugan-Rocha S."/>
            <person name="Dunkov B.C."/>
            <person name="Dunn P."/>
            <person name="Durbin K.J."/>
            <person name="Evangelista C.C."/>
            <person name="Ferraz C."/>
            <person name="Ferriera S."/>
            <person name="Fleischmann W."/>
            <person name="Fosler C."/>
            <person name="Gabrielian A.E."/>
            <person name="Garg N.S."/>
            <person name="Gelbart W.M."/>
            <person name="Glasser K."/>
            <person name="Glodek A."/>
            <person name="Gong F."/>
            <person name="Gorrell J.H."/>
            <person name="Gu Z."/>
            <person name="Guan P."/>
            <person name="Harris M."/>
            <person name="Harris N.L."/>
            <person name="Harvey D.A."/>
            <person name="Heiman T.J."/>
            <person name="Hernandez J.R."/>
            <person name="Houck J."/>
            <person name="Hostin D."/>
            <person name="Houston K.A."/>
            <person name="Howland T.J."/>
            <person name="Wei M.-H."/>
            <person name="Ibegwam C."/>
            <person name="Jalali M."/>
            <person name="Kalush F."/>
            <person name="Karpen G.H."/>
            <person name="Ke Z."/>
            <person name="Kennison J.A."/>
            <person name="Ketchum K.A."/>
            <person name="Kimmel B.E."/>
            <person name="Kodira C.D."/>
            <person name="Kraft C.L."/>
            <person name="Kravitz S."/>
            <person name="Kulp D."/>
            <person name="Lai Z."/>
            <person name="Lasko P."/>
            <person name="Lei Y."/>
            <person name="Levitsky A.A."/>
            <person name="Li J.H."/>
            <person name="Li Z."/>
            <person name="Liang Y."/>
            <person name="Lin X."/>
            <person name="Liu X."/>
            <person name="Mattei B."/>
            <person name="McIntosh T.C."/>
            <person name="McLeod M.P."/>
            <person name="McPherson D."/>
            <person name="Merkulov G."/>
            <person name="Milshina N.V."/>
            <person name="Mobarry C."/>
            <person name="Morris J."/>
            <person name="Moshrefi A."/>
            <person name="Mount S.M."/>
            <person name="Moy M."/>
            <person name="Murphy B."/>
            <person name="Murphy L."/>
            <person name="Muzny D.M."/>
            <person name="Nelson D.L."/>
            <person name="Nelson D.R."/>
            <person name="Nelson K.A."/>
            <person name="Nixon K."/>
            <person name="Nusskern D.R."/>
            <person name="Pacleb J.M."/>
            <person name="Palazzolo M."/>
            <person name="Pittman G.S."/>
            <person name="Pan S."/>
            <person name="Pollard J."/>
            <person name="Puri V."/>
            <person name="Reese M.G."/>
            <person name="Reinert K."/>
            <person name="Remington K."/>
            <person name="Saunders R.D.C."/>
            <person name="Scheeler F."/>
            <person name="Shen H."/>
            <person name="Shue B.C."/>
            <person name="Siden-Kiamos I."/>
            <person name="Simpson M."/>
            <person name="Skupski M.P."/>
            <person name="Smith T.J."/>
            <person name="Spier E."/>
            <person name="Spradling A.C."/>
            <person name="Stapleton M."/>
            <person name="Strong R."/>
            <person name="Sun E."/>
            <person name="Svirskas R."/>
            <person name="Tector C."/>
            <person name="Turner R."/>
            <person name="Venter E."/>
            <person name="Wang A.H."/>
            <person name="Wang X."/>
            <person name="Wang Z.-Y."/>
            <person name="Wassarman D.A."/>
            <person name="Weinstock G.M."/>
            <person name="Weissenbach J."/>
            <person name="Williams S.M."/>
            <person name="Woodage T."/>
            <person name="Worley K.C."/>
            <person name="Wu D."/>
            <person name="Yang S."/>
            <person name="Yao Q.A."/>
            <person name="Ye J."/>
            <person name="Yeh R.-F."/>
            <person name="Zaveri J.S."/>
            <person name="Zhan M."/>
            <person name="Zhang G."/>
            <person name="Zhao Q."/>
            <person name="Zheng L."/>
            <person name="Zheng X.H."/>
            <person name="Zhong F.N."/>
            <person name="Zhong W."/>
            <person name="Zhou X."/>
            <person name="Zhu S.C."/>
            <person name="Zhu X."/>
            <person name="Smith H.O."/>
            <person name="Gibbs R.A."/>
            <person name="Myers E.W."/>
            <person name="Rubin G.M."/>
            <person name="Venter J.C."/>
        </authorList>
    </citation>
    <scope>NUCLEOTIDE SEQUENCE [LARGE SCALE GENOMIC DNA]</scope>
    <source>
        <strain>Berkeley</strain>
    </source>
</reference>
<reference key="3">
    <citation type="journal article" date="2002" name="Genome Biol.">
        <title>Annotation of the Drosophila melanogaster euchromatic genome: a systematic review.</title>
        <authorList>
            <person name="Misra S."/>
            <person name="Crosby M.A."/>
            <person name="Mungall C.J."/>
            <person name="Matthews B.B."/>
            <person name="Campbell K.S."/>
            <person name="Hradecky P."/>
            <person name="Huang Y."/>
            <person name="Kaminker J.S."/>
            <person name="Millburn G.H."/>
            <person name="Prochnik S.E."/>
            <person name="Smith C.D."/>
            <person name="Tupy J.L."/>
            <person name="Whitfield E.J."/>
            <person name="Bayraktaroglu L."/>
            <person name="Berman B.P."/>
            <person name="Bettencourt B.R."/>
            <person name="Celniker S.E."/>
            <person name="de Grey A.D.N.J."/>
            <person name="Drysdale R.A."/>
            <person name="Harris N.L."/>
            <person name="Richter J."/>
            <person name="Russo S."/>
            <person name="Schroeder A.J."/>
            <person name="Shu S.Q."/>
            <person name="Stapleton M."/>
            <person name="Yamada C."/>
            <person name="Ashburner M."/>
            <person name="Gelbart W.M."/>
            <person name="Rubin G.M."/>
            <person name="Lewis S.E."/>
        </authorList>
    </citation>
    <scope>GENOME REANNOTATION</scope>
    <scope>ALTERNATIVE SPLICING</scope>
    <source>
        <strain>Berkeley</strain>
    </source>
</reference>
<reference key="4">
    <citation type="journal article" date="2007" name="Mol. Biosyst.">
        <title>An integrated chemical, mass spectrometric and computational strategy for (quantitative) phosphoproteomics: application to Drosophila melanogaster Kc167 cells.</title>
        <authorList>
            <person name="Bodenmiller B."/>
            <person name="Mueller L.N."/>
            <person name="Pedrioli P.G.A."/>
            <person name="Pflieger D."/>
            <person name="Juenger M.A."/>
            <person name="Eng J.K."/>
            <person name="Aebersold R."/>
            <person name="Tao W.A."/>
        </authorList>
    </citation>
    <scope>PHOSPHORYLATION [LARGE SCALE ANALYSIS] AT SER-262</scope>
    <scope>IDENTIFICATION BY MASS SPECTROMETRY</scope>
</reference>
<reference key="5">
    <citation type="journal article" date="2008" name="Development">
        <title>In vivo regulation of Yorkie phosphorylation and localization.</title>
        <authorList>
            <person name="Oh H."/>
            <person name="Irvine K.D."/>
        </authorList>
    </citation>
    <scope>INTERACTION WITH YKI</scope>
</reference>
<reference key="6">
    <citation type="journal article" date="2010" name="Dev. Biol.">
        <title>Hippo signaling regulates Yorkie nuclear localization and activity through 14-3-3 dependent and independent mechanisms.</title>
        <authorList>
            <person name="Ren F."/>
            <person name="Zhang L."/>
            <person name="Jiang J."/>
        </authorList>
    </citation>
    <scope>FUNCTION</scope>
    <scope>INTERACTION WITH YKI</scope>
</reference>
<reference key="7">
    <citation type="journal article" date="2020" name="Elife">
        <title>Ser/Thr kinase Trc controls neurite outgrowth in Drosophila by modulating microtubule-microtubule sliding.</title>
        <authorList>
            <person name="Norkett R."/>
            <person name="Del Castillo U."/>
            <person name="Lu W."/>
            <person name="Gelfand V.I."/>
        </authorList>
    </citation>
    <scope>FUNCTION</scope>
    <scope>INTERACTION WITH PAV AND MICROTUBULES</scope>
</reference>
<feature type="chain" id="PRO_0000058650" description="14-3-3 protein epsilon">
    <location>
        <begin position="1"/>
        <end position="262"/>
    </location>
</feature>
<feature type="region of interest" description="Disordered" evidence="2">
    <location>
        <begin position="236"/>
        <end position="262"/>
    </location>
</feature>
<feature type="modified residue" description="Phosphoserine" evidence="3">
    <location>
        <position position="262"/>
    </location>
</feature>
<feature type="splice variant" id="VSP_026086" description="In isoform C." evidence="9">
    <location>
        <begin position="239"/>
        <end position="244"/>
    </location>
</feature>
<feature type="splice variant" id="VSP_008204" description="In isoform D." evidence="8">
    <location>
        <begin position="239"/>
        <end position="240"/>
    </location>
</feature>
<feature type="splice variant" id="VSP_008203" description="In isoform B." evidence="9">
    <location>
        <position position="239"/>
    </location>
</feature>
<feature type="mutagenesis site" description="Suppressor of sev-Ras1 V12; subviable." evidence="7">
    <original>E</original>
    <variation>K</variation>
    <location>
        <position position="183"/>
    </location>
</feature>
<feature type="mutagenesis site" description="Suppressor of sev-Ras1 V12." evidence="7">
    <original>F</original>
    <variation>Y</variation>
    <location>
        <position position="199"/>
    </location>
</feature>
<feature type="mutagenesis site" description="Suppressor of sev-Ras1 V12." evidence="7">
    <original>Y</original>
    <variation>F</variation>
    <location>
        <position position="214"/>
    </location>
</feature>
<evidence type="ECO:0000250" key="1">
    <source>
        <dbReference type="UniProtKB" id="P29310"/>
    </source>
</evidence>
<evidence type="ECO:0000256" key="2">
    <source>
        <dbReference type="SAM" id="MobiDB-lite"/>
    </source>
</evidence>
<evidence type="ECO:0000269" key="3">
    <source>
    </source>
</evidence>
<evidence type="ECO:0000269" key="4">
    <source>
    </source>
</evidence>
<evidence type="ECO:0000269" key="5">
    <source>
    </source>
</evidence>
<evidence type="ECO:0000269" key="6">
    <source>
    </source>
</evidence>
<evidence type="ECO:0000269" key="7">
    <source>
    </source>
</evidence>
<evidence type="ECO:0000303" key="8">
    <source>
    </source>
</evidence>
<evidence type="ECO:0000305" key="9"/>
<gene>
    <name type="primary">14-3-3epsilon</name>
    <name type="synonym">14-3-3e</name>
    <name type="synonym">SR3-9</name>
    <name type="ORF">CG31196</name>
</gene>
<keyword id="KW-0025">Alternative splicing</keyword>
<keyword id="KW-0597">Phosphoprotein</keyword>
<keyword id="KW-1185">Reference proteome</keyword>
<protein>
    <recommendedName>
        <fullName>14-3-3 protein epsilon</fullName>
    </recommendedName>
    <alternativeName>
        <fullName>Suppressor of Ras1 3-9</fullName>
    </alternativeName>
</protein>
<organism>
    <name type="scientific">Drosophila melanogaster</name>
    <name type="common">Fruit fly</name>
    <dbReference type="NCBI Taxonomy" id="7227"/>
    <lineage>
        <taxon>Eukaryota</taxon>
        <taxon>Metazoa</taxon>
        <taxon>Ecdysozoa</taxon>
        <taxon>Arthropoda</taxon>
        <taxon>Hexapoda</taxon>
        <taxon>Insecta</taxon>
        <taxon>Pterygota</taxon>
        <taxon>Neoptera</taxon>
        <taxon>Endopterygota</taxon>
        <taxon>Diptera</taxon>
        <taxon>Brachycera</taxon>
        <taxon>Muscomorpha</taxon>
        <taxon>Ephydroidea</taxon>
        <taxon>Drosophilidae</taxon>
        <taxon>Drosophila</taxon>
        <taxon>Sophophora</taxon>
    </lineage>
</organism>
<proteinExistence type="evidence at protein level"/>
<dbReference type="EMBL" id="U84898">
    <property type="protein sequence ID" value="AAC47520.1"/>
    <property type="molecule type" value="Genomic_DNA"/>
</dbReference>
<dbReference type="EMBL" id="U84897">
    <property type="protein sequence ID" value="AAC47519.1"/>
    <property type="molecule type" value="mRNA"/>
</dbReference>
<dbReference type="EMBL" id="AE014297">
    <property type="protein sequence ID" value="AAF55519.2"/>
    <property type="molecule type" value="Genomic_DNA"/>
</dbReference>
<dbReference type="EMBL" id="AE014297">
    <property type="protein sequence ID" value="AAN13764.1"/>
    <property type="molecule type" value="Genomic_DNA"/>
</dbReference>
<dbReference type="EMBL" id="AE014297">
    <property type="protein sequence ID" value="AAN13765.1"/>
    <property type="molecule type" value="Genomic_DNA"/>
</dbReference>
<dbReference type="EMBL" id="AE014297">
    <property type="protein sequence ID" value="AAN13766.1"/>
    <property type="molecule type" value="Genomic_DNA"/>
</dbReference>
<dbReference type="RefSeq" id="NP_732309.1">
    <molecule id="P92177-3"/>
    <property type="nucleotide sequence ID" value="NM_169796.2"/>
</dbReference>
<dbReference type="RefSeq" id="NP_732310.1">
    <molecule id="P92177-2"/>
    <property type="nucleotide sequence ID" value="NM_169797.3"/>
</dbReference>
<dbReference type="RefSeq" id="NP_732311.1">
    <molecule id="P92177-1"/>
    <property type="nucleotide sequence ID" value="NM_169798.3"/>
</dbReference>
<dbReference type="RefSeq" id="NP_732312.1">
    <molecule id="P92177-4"/>
    <property type="nucleotide sequence ID" value="NM_169799.2"/>
</dbReference>
<dbReference type="SMR" id="P92177"/>
<dbReference type="BioGRID" id="67207">
    <property type="interactions" value="64"/>
</dbReference>
<dbReference type="DIP" id="DIP-18498N"/>
<dbReference type="FunCoup" id="P92177">
    <property type="interactions" value="1698"/>
</dbReference>
<dbReference type="IntAct" id="P92177">
    <property type="interactions" value="249"/>
</dbReference>
<dbReference type="MINT" id="P92177"/>
<dbReference type="STRING" id="7227.FBpp0082987"/>
<dbReference type="GlyGen" id="P92177">
    <property type="glycosylation" value="1 site, 1 O-linked glycan (1 site)"/>
</dbReference>
<dbReference type="iPTMnet" id="P92177"/>
<dbReference type="PaxDb" id="7227-FBpp0082987"/>
<dbReference type="DNASU" id="42186"/>
<dbReference type="EnsemblMetazoa" id="FBtr0083565">
    <molecule id="P92177-3"/>
    <property type="protein sequence ID" value="FBpp0082987"/>
    <property type="gene ID" value="FBgn0020238"/>
</dbReference>
<dbReference type="EnsemblMetazoa" id="FBtr0083566">
    <molecule id="P92177-2"/>
    <property type="protein sequence ID" value="FBpp0082988"/>
    <property type="gene ID" value="FBgn0020238"/>
</dbReference>
<dbReference type="EnsemblMetazoa" id="FBtr0083567">
    <molecule id="P92177-4"/>
    <property type="protein sequence ID" value="FBpp0082989"/>
    <property type="gene ID" value="FBgn0020238"/>
</dbReference>
<dbReference type="EnsemblMetazoa" id="FBtr0083568">
    <molecule id="P92177-1"/>
    <property type="protein sequence ID" value="FBpp0082990"/>
    <property type="gene ID" value="FBgn0020238"/>
</dbReference>
<dbReference type="GeneID" id="42186"/>
<dbReference type="KEGG" id="dme:Dmel_CG31196"/>
<dbReference type="AGR" id="FB:FBgn0020238"/>
<dbReference type="CTD" id="42186"/>
<dbReference type="FlyBase" id="FBgn0020238">
    <property type="gene designation" value="14-3-3epsilon"/>
</dbReference>
<dbReference type="VEuPathDB" id="VectorBase:FBgn0020238"/>
<dbReference type="eggNOG" id="KOG0841">
    <property type="taxonomic scope" value="Eukaryota"/>
</dbReference>
<dbReference type="GeneTree" id="ENSGT01110000267238"/>
<dbReference type="InParanoid" id="P92177"/>
<dbReference type="OMA" id="KGCQLAR"/>
<dbReference type="OrthoDB" id="10260625at2759"/>
<dbReference type="PhylomeDB" id="P92177"/>
<dbReference type="Reactome" id="R-DME-3371453">
    <property type="pathway name" value="Regulation of HSF1-mediated heat shock response"/>
</dbReference>
<dbReference type="Reactome" id="R-DME-3371511">
    <property type="pathway name" value="HSF1 activation"/>
</dbReference>
<dbReference type="Reactome" id="R-DME-390098">
    <property type="pathway name" value="Phosphorylation-dependent inhibition of YKI"/>
</dbReference>
<dbReference type="Reactome" id="R-DME-432553">
    <property type="pathway name" value="Phosphorylation of PER and TIM"/>
</dbReference>
<dbReference type="Reactome" id="R-DME-5625740">
    <property type="pathway name" value="RHO GTPases activate PKNs"/>
</dbReference>
<dbReference type="Reactome" id="R-DME-5628897">
    <property type="pathway name" value="TP53 Regulates Metabolic Genes"/>
</dbReference>
<dbReference type="Reactome" id="R-DME-75035">
    <property type="pathway name" value="Chk1/Chk2(Cds1) mediated inactivation of Cyclin B:Cdk1 complex"/>
</dbReference>
<dbReference type="Reactome" id="R-DME-8876198">
    <property type="pathway name" value="RAB GEFs exchange GTP for GDP on RABs"/>
</dbReference>
<dbReference type="SignaLink" id="P92177"/>
<dbReference type="BioGRID-ORCS" id="42186">
    <property type="hits" value="0 hits in 3 CRISPR screens"/>
</dbReference>
<dbReference type="ChiTaRS" id="14-3-3epsilon">
    <property type="organism name" value="fly"/>
</dbReference>
<dbReference type="GenomeRNAi" id="42186"/>
<dbReference type="PRO" id="PR:P92177"/>
<dbReference type="Proteomes" id="UP000000803">
    <property type="component" value="Chromosome 3R"/>
</dbReference>
<dbReference type="Bgee" id="FBgn0020238">
    <property type="expression patterns" value="Expressed in T neuron T4c (Drosophila) in embryonic/larval optic lobe (Drosophila) and 288 other cell types or tissues"/>
</dbReference>
<dbReference type="ExpressionAtlas" id="P92177">
    <property type="expression patterns" value="baseline and differential"/>
</dbReference>
<dbReference type="GO" id="GO:0005813">
    <property type="term" value="C:centrosome"/>
    <property type="evidence" value="ECO:0007005"/>
    <property type="project" value="FlyBase"/>
</dbReference>
<dbReference type="GO" id="GO:0005694">
    <property type="term" value="C:chromosome"/>
    <property type="evidence" value="ECO:0000314"/>
    <property type="project" value="FlyBase"/>
</dbReference>
<dbReference type="GO" id="GO:0005737">
    <property type="term" value="C:cytoplasm"/>
    <property type="evidence" value="ECO:0000314"/>
    <property type="project" value="FlyBase"/>
</dbReference>
<dbReference type="GO" id="GO:0005829">
    <property type="term" value="C:cytosol"/>
    <property type="evidence" value="ECO:0000304"/>
    <property type="project" value="Reactome"/>
</dbReference>
<dbReference type="GO" id="GO:0045172">
    <property type="term" value="C:germline ring canal"/>
    <property type="evidence" value="ECO:0000314"/>
    <property type="project" value="FlyBase"/>
</dbReference>
<dbReference type="GO" id="GO:0005739">
    <property type="term" value="C:mitochondrion"/>
    <property type="evidence" value="ECO:0000250"/>
    <property type="project" value="FlyBase"/>
</dbReference>
<dbReference type="GO" id="GO:0005654">
    <property type="term" value="C:nucleoplasm"/>
    <property type="evidence" value="ECO:0007005"/>
    <property type="project" value="FlyBase"/>
</dbReference>
<dbReference type="GO" id="GO:0005634">
    <property type="term" value="C:nucleus"/>
    <property type="evidence" value="ECO:0000314"/>
    <property type="project" value="FlyBase"/>
</dbReference>
<dbReference type="GO" id="GO:0005886">
    <property type="term" value="C:plasma membrane"/>
    <property type="evidence" value="ECO:0007005"/>
    <property type="project" value="FlyBase"/>
</dbReference>
<dbReference type="GO" id="GO:0140313">
    <property type="term" value="F:molecular sequestering activity"/>
    <property type="evidence" value="ECO:0000314"/>
    <property type="project" value="FlyBase"/>
</dbReference>
<dbReference type="GO" id="GO:0050815">
    <property type="term" value="F:phosphoserine residue binding"/>
    <property type="evidence" value="ECO:0000353"/>
    <property type="project" value="FlyBase"/>
</dbReference>
<dbReference type="GO" id="GO:0046982">
    <property type="term" value="F:protein heterodimerization activity"/>
    <property type="evidence" value="ECO:0000353"/>
    <property type="project" value="FlyBase"/>
</dbReference>
<dbReference type="GO" id="GO:0001223">
    <property type="term" value="F:transcription coactivator binding"/>
    <property type="evidence" value="ECO:0000353"/>
    <property type="project" value="FlyBase"/>
</dbReference>
<dbReference type="GO" id="GO:0007411">
    <property type="term" value="P:axon guidance"/>
    <property type="evidence" value="ECO:0000315"/>
    <property type="project" value="FlyBase"/>
</dbReference>
<dbReference type="GO" id="GO:0008340">
    <property type="term" value="P:determination of adult lifespan"/>
    <property type="evidence" value="ECO:0000315"/>
    <property type="project" value="FlyBase"/>
</dbReference>
<dbReference type="GO" id="GO:0000077">
    <property type="term" value="P:DNA damage checkpoint signaling"/>
    <property type="evidence" value="ECO:0000315"/>
    <property type="project" value="FlyBase"/>
</dbReference>
<dbReference type="GO" id="GO:0008354">
    <property type="term" value="P:germ cell migration"/>
    <property type="evidence" value="ECO:0000315"/>
    <property type="project" value="FlyBase"/>
</dbReference>
<dbReference type="GO" id="GO:0007294">
    <property type="term" value="P:germarium-derived oocyte fate determination"/>
    <property type="evidence" value="ECO:0000315"/>
    <property type="project" value="FlyBase"/>
</dbReference>
<dbReference type="GO" id="GO:0051012">
    <property type="term" value="P:microtubule sliding"/>
    <property type="evidence" value="ECO:0000315"/>
    <property type="project" value="UniProtKB"/>
</dbReference>
<dbReference type="GO" id="GO:0150013">
    <property type="term" value="P:negative regulation of neuron projection arborization"/>
    <property type="evidence" value="ECO:0000315"/>
    <property type="project" value="UniProtKB"/>
</dbReference>
<dbReference type="GO" id="GO:0008103">
    <property type="term" value="P:oocyte microtubule cytoskeleton polarization"/>
    <property type="evidence" value="ECO:0000315"/>
    <property type="project" value="FlyBase"/>
</dbReference>
<dbReference type="GO" id="GO:0045927">
    <property type="term" value="P:positive regulation of growth"/>
    <property type="evidence" value="ECO:0000315"/>
    <property type="project" value="FlyBase"/>
</dbReference>
<dbReference type="GO" id="GO:0035332">
    <property type="term" value="P:positive regulation of hippo signaling"/>
    <property type="evidence" value="ECO:0000315"/>
    <property type="project" value="FlyBase"/>
</dbReference>
<dbReference type="GO" id="GO:0046579">
    <property type="term" value="P:positive regulation of Ras protein signal transduction"/>
    <property type="evidence" value="ECO:0007003"/>
    <property type="project" value="FlyBase"/>
</dbReference>
<dbReference type="GO" id="GO:0008104">
    <property type="term" value="P:protein localization"/>
    <property type="evidence" value="ECO:0000318"/>
    <property type="project" value="GO_Central"/>
</dbReference>
<dbReference type="GO" id="GO:0007460">
    <property type="term" value="P:R8 cell fate commitment"/>
    <property type="evidence" value="ECO:0000315"/>
    <property type="project" value="FlyBase"/>
</dbReference>
<dbReference type="GO" id="GO:0040008">
    <property type="term" value="P:regulation of growth"/>
    <property type="evidence" value="ECO:0000316"/>
    <property type="project" value="FlyBase"/>
</dbReference>
<dbReference type="GO" id="GO:0007346">
    <property type="term" value="P:regulation of mitotic cell cycle"/>
    <property type="evidence" value="ECO:0000318"/>
    <property type="project" value="GO_Central"/>
</dbReference>
<dbReference type="GO" id="GO:0007088">
    <property type="term" value="P:regulation of mitotic nuclear division"/>
    <property type="evidence" value="ECO:0000315"/>
    <property type="project" value="FlyBase"/>
</dbReference>
<dbReference type="GO" id="GO:0009411">
    <property type="term" value="P:response to UV"/>
    <property type="evidence" value="ECO:0000315"/>
    <property type="project" value="FlyBase"/>
</dbReference>
<dbReference type="GO" id="GO:0007165">
    <property type="term" value="P:signal transduction"/>
    <property type="evidence" value="ECO:0000318"/>
    <property type="project" value="GO_Central"/>
</dbReference>
<dbReference type="GO" id="GO:0048190">
    <property type="term" value="P:wing disc dorsal/ventral pattern formation"/>
    <property type="evidence" value="ECO:0000316"/>
    <property type="project" value="FlyBase"/>
</dbReference>
<dbReference type="CDD" id="cd10020">
    <property type="entry name" value="14-3-3_epsilon"/>
    <property type="match status" value="1"/>
</dbReference>
<dbReference type="FunFam" id="1.20.190.20:FF:000002">
    <property type="entry name" value="14-3-3 protein epsilon"/>
    <property type="match status" value="1"/>
</dbReference>
<dbReference type="Gene3D" id="1.20.190.20">
    <property type="entry name" value="14-3-3 domain"/>
    <property type="match status" value="1"/>
</dbReference>
<dbReference type="InterPro" id="IPR000308">
    <property type="entry name" value="14-3-3"/>
</dbReference>
<dbReference type="InterPro" id="IPR023409">
    <property type="entry name" value="14-3-3_CS"/>
</dbReference>
<dbReference type="InterPro" id="IPR036815">
    <property type="entry name" value="14-3-3_dom_sf"/>
</dbReference>
<dbReference type="InterPro" id="IPR023410">
    <property type="entry name" value="14-3-3_domain"/>
</dbReference>
<dbReference type="PANTHER" id="PTHR18860">
    <property type="entry name" value="14-3-3 PROTEIN"/>
    <property type="match status" value="1"/>
</dbReference>
<dbReference type="Pfam" id="PF00244">
    <property type="entry name" value="14-3-3"/>
    <property type="match status" value="1"/>
</dbReference>
<dbReference type="PIRSF" id="PIRSF000868">
    <property type="entry name" value="14-3-3"/>
    <property type="match status" value="1"/>
</dbReference>
<dbReference type="PRINTS" id="PR00305">
    <property type="entry name" value="1433ZETA"/>
</dbReference>
<dbReference type="SMART" id="SM00101">
    <property type="entry name" value="14_3_3"/>
    <property type="match status" value="1"/>
</dbReference>
<dbReference type="SUPFAM" id="SSF48445">
    <property type="entry name" value="14-3-3 protein"/>
    <property type="match status" value="1"/>
</dbReference>
<dbReference type="PROSITE" id="PS00796">
    <property type="entry name" value="1433_1"/>
    <property type="match status" value="1"/>
</dbReference>
<dbReference type="PROSITE" id="PS00797">
    <property type="entry name" value="1433_2"/>
    <property type="match status" value="1"/>
</dbReference>